<comment type="function">
    <text evidence="1">Catalyzes the methylthiolation of N6-(dimethylallyl)adenosine (i(6)A), leading to the formation of 2-methylthio-N6-(dimethylallyl)adenosine (ms(2)i(6)A) at position 37 in tRNAs that read codons beginning with uridine.</text>
</comment>
<comment type="catalytic activity">
    <reaction evidence="1">
        <text>N(6)-dimethylallyladenosine(37) in tRNA + (sulfur carrier)-SH + AH2 + 2 S-adenosyl-L-methionine = 2-methylsulfanyl-N(6)-dimethylallyladenosine(37) in tRNA + (sulfur carrier)-H + 5'-deoxyadenosine + L-methionine + A + S-adenosyl-L-homocysteine + 2 H(+)</text>
        <dbReference type="Rhea" id="RHEA:37067"/>
        <dbReference type="Rhea" id="RHEA-COMP:10375"/>
        <dbReference type="Rhea" id="RHEA-COMP:10376"/>
        <dbReference type="Rhea" id="RHEA-COMP:14737"/>
        <dbReference type="Rhea" id="RHEA-COMP:14739"/>
        <dbReference type="ChEBI" id="CHEBI:13193"/>
        <dbReference type="ChEBI" id="CHEBI:15378"/>
        <dbReference type="ChEBI" id="CHEBI:17319"/>
        <dbReference type="ChEBI" id="CHEBI:17499"/>
        <dbReference type="ChEBI" id="CHEBI:29917"/>
        <dbReference type="ChEBI" id="CHEBI:57844"/>
        <dbReference type="ChEBI" id="CHEBI:57856"/>
        <dbReference type="ChEBI" id="CHEBI:59789"/>
        <dbReference type="ChEBI" id="CHEBI:64428"/>
        <dbReference type="ChEBI" id="CHEBI:74415"/>
        <dbReference type="ChEBI" id="CHEBI:74417"/>
        <dbReference type="EC" id="2.8.4.3"/>
    </reaction>
</comment>
<comment type="cofactor">
    <cofactor evidence="1">
        <name>[4Fe-4S] cluster</name>
        <dbReference type="ChEBI" id="CHEBI:49883"/>
    </cofactor>
    <text evidence="1">Binds 2 [4Fe-4S] clusters. One cluster is coordinated with 3 cysteines and an exchangeable S-adenosyl-L-methionine.</text>
</comment>
<comment type="subunit">
    <text evidence="1">Monomer.</text>
</comment>
<comment type="subcellular location">
    <subcellularLocation>
        <location evidence="1">Cytoplasm</location>
    </subcellularLocation>
</comment>
<comment type="similarity">
    <text evidence="1">Belongs to the methylthiotransferase family. MiaB subfamily.</text>
</comment>
<dbReference type="EC" id="2.8.4.3" evidence="1"/>
<dbReference type="EMBL" id="CP000698">
    <property type="protein sequence ID" value="ABQ27288.1"/>
    <property type="molecule type" value="Genomic_DNA"/>
</dbReference>
<dbReference type="RefSeq" id="WP_011939954.1">
    <property type="nucleotide sequence ID" value="NC_009483.1"/>
</dbReference>
<dbReference type="SMR" id="A5G670"/>
<dbReference type="STRING" id="351605.Gura_3127"/>
<dbReference type="KEGG" id="gur:Gura_3127"/>
<dbReference type="HOGENOM" id="CLU_018697_2_0_7"/>
<dbReference type="OrthoDB" id="9805215at2"/>
<dbReference type="Proteomes" id="UP000006695">
    <property type="component" value="Chromosome"/>
</dbReference>
<dbReference type="GO" id="GO:0005829">
    <property type="term" value="C:cytosol"/>
    <property type="evidence" value="ECO:0007669"/>
    <property type="project" value="TreeGrafter"/>
</dbReference>
<dbReference type="GO" id="GO:0051539">
    <property type="term" value="F:4 iron, 4 sulfur cluster binding"/>
    <property type="evidence" value="ECO:0007669"/>
    <property type="project" value="UniProtKB-UniRule"/>
</dbReference>
<dbReference type="GO" id="GO:0046872">
    <property type="term" value="F:metal ion binding"/>
    <property type="evidence" value="ECO:0007669"/>
    <property type="project" value="UniProtKB-KW"/>
</dbReference>
<dbReference type="GO" id="GO:0035597">
    <property type="term" value="F:N6-isopentenyladenosine methylthiotransferase activity"/>
    <property type="evidence" value="ECO:0007669"/>
    <property type="project" value="TreeGrafter"/>
</dbReference>
<dbReference type="CDD" id="cd01335">
    <property type="entry name" value="Radical_SAM"/>
    <property type="match status" value="1"/>
</dbReference>
<dbReference type="FunFam" id="3.40.50.12160:FF:000003">
    <property type="entry name" value="CDK5 regulatory subunit-associated protein 1"/>
    <property type="match status" value="1"/>
</dbReference>
<dbReference type="FunFam" id="3.80.30.20:FF:000001">
    <property type="entry name" value="tRNA-2-methylthio-N(6)-dimethylallyladenosine synthase 2"/>
    <property type="match status" value="1"/>
</dbReference>
<dbReference type="Gene3D" id="3.40.50.12160">
    <property type="entry name" value="Methylthiotransferase, N-terminal domain"/>
    <property type="match status" value="1"/>
</dbReference>
<dbReference type="Gene3D" id="3.80.30.20">
    <property type="entry name" value="tm_1862 like domain"/>
    <property type="match status" value="1"/>
</dbReference>
<dbReference type="HAMAP" id="MF_01864">
    <property type="entry name" value="tRNA_metthiotr_MiaB"/>
    <property type="match status" value="1"/>
</dbReference>
<dbReference type="InterPro" id="IPR006638">
    <property type="entry name" value="Elp3/MiaA/NifB-like_rSAM"/>
</dbReference>
<dbReference type="InterPro" id="IPR005839">
    <property type="entry name" value="Methylthiotransferase"/>
</dbReference>
<dbReference type="InterPro" id="IPR020612">
    <property type="entry name" value="Methylthiotransferase_CS"/>
</dbReference>
<dbReference type="InterPro" id="IPR013848">
    <property type="entry name" value="Methylthiotransferase_N"/>
</dbReference>
<dbReference type="InterPro" id="IPR038135">
    <property type="entry name" value="Methylthiotransferase_N_sf"/>
</dbReference>
<dbReference type="InterPro" id="IPR006463">
    <property type="entry name" value="MiaB_methiolase"/>
</dbReference>
<dbReference type="InterPro" id="IPR007197">
    <property type="entry name" value="rSAM"/>
</dbReference>
<dbReference type="InterPro" id="IPR023404">
    <property type="entry name" value="rSAM_horseshoe"/>
</dbReference>
<dbReference type="InterPro" id="IPR002792">
    <property type="entry name" value="TRAM_dom"/>
</dbReference>
<dbReference type="NCBIfam" id="TIGR01574">
    <property type="entry name" value="miaB-methiolase"/>
    <property type="match status" value="1"/>
</dbReference>
<dbReference type="NCBIfam" id="TIGR00089">
    <property type="entry name" value="MiaB/RimO family radical SAM methylthiotransferase"/>
    <property type="match status" value="1"/>
</dbReference>
<dbReference type="PANTHER" id="PTHR43020">
    <property type="entry name" value="CDK5 REGULATORY SUBUNIT-ASSOCIATED PROTEIN 1"/>
    <property type="match status" value="1"/>
</dbReference>
<dbReference type="PANTHER" id="PTHR43020:SF2">
    <property type="entry name" value="MITOCHONDRIAL TRNA METHYLTHIOTRANSFERASE CDK5RAP1"/>
    <property type="match status" value="1"/>
</dbReference>
<dbReference type="Pfam" id="PF04055">
    <property type="entry name" value="Radical_SAM"/>
    <property type="match status" value="1"/>
</dbReference>
<dbReference type="Pfam" id="PF01938">
    <property type="entry name" value="TRAM"/>
    <property type="match status" value="1"/>
</dbReference>
<dbReference type="Pfam" id="PF00919">
    <property type="entry name" value="UPF0004"/>
    <property type="match status" value="1"/>
</dbReference>
<dbReference type="SFLD" id="SFLDF00273">
    <property type="entry name" value="(dimethylallyl)adenosine_tRNA"/>
    <property type="match status" value="1"/>
</dbReference>
<dbReference type="SFLD" id="SFLDG01082">
    <property type="entry name" value="B12-binding_domain_containing"/>
    <property type="match status" value="1"/>
</dbReference>
<dbReference type="SFLD" id="SFLDG01061">
    <property type="entry name" value="methylthiotransferase"/>
    <property type="match status" value="1"/>
</dbReference>
<dbReference type="SMART" id="SM00729">
    <property type="entry name" value="Elp3"/>
    <property type="match status" value="1"/>
</dbReference>
<dbReference type="SUPFAM" id="SSF102114">
    <property type="entry name" value="Radical SAM enzymes"/>
    <property type="match status" value="1"/>
</dbReference>
<dbReference type="PROSITE" id="PS51449">
    <property type="entry name" value="MTTASE_N"/>
    <property type="match status" value="1"/>
</dbReference>
<dbReference type="PROSITE" id="PS01278">
    <property type="entry name" value="MTTASE_RADICAL"/>
    <property type="match status" value="1"/>
</dbReference>
<dbReference type="PROSITE" id="PS51918">
    <property type="entry name" value="RADICAL_SAM"/>
    <property type="match status" value="1"/>
</dbReference>
<dbReference type="PROSITE" id="PS50926">
    <property type="entry name" value="TRAM"/>
    <property type="match status" value="1"/>
</dbReference>
<name>MIAB_GEOUR</name>
<organism>
    <name type="scientific">Geotalea uraniireducens (strain Rf4)</name>
    <name type="common">Geobacter uraniireducens</name>
    <dbReference type="NCBI Taxonomy" id="351605"/>
    <lineage>
        <taxon>Bacteria</taxon>
        <taxon>Pseudomonadati</taxon>
        <taxon>Thermodesulfobacteriota</taxon>
        <taxon>Desulfuromonadia</taxon>
        <taxon>Geobacterales</taxon>
        <taxon>Geobacteraceae</taxon>
        <taxon>Geotalea</taxon>
    </lineage>
</organism>
<protein>
    <recommendedName>
        <fullName evidence="1">tRNA-2-methylthio-N(6)-dimethylallyladenosine synthase</fullName>
        <ecNumber evidence="1">2.8.4.3</ecNumber>
    </recommendedName>
    <alternativeName>
        <fullName evidence="1">(Dimethylallyl)adenosine tRNA methylthiotransferase MiaB</fullName>
    </alternativeName>
    <alternativeName>
        <fullName evidence="1">tRNA-i(6)A37 methylthiotransferase</fullName>
    </alternativeName>
</protein>
<feature type="chain" id="PRO_0000374321" description="tRNA-2-methylthio-N(6)-dimethylallyladenosine synthase">
    <location>
        <begin position="1"/>
        <end position="440"/>
    </location>
</feature>
<feature type="domain" description="MTTase N-terminal" evidence="1">
    <location>
        <begin position="5"/>
        <end position="121"/>
    </location>
</feature>
<feature type="domain" description="Radical SAM core" evidence="2">
    <location>
        <begin position="145"/>
        <end position="375"/>
    </location>
</feature>
<feature type="domain" description="TRAM" evidence="1">
    <location>
        <begin position="378"/>
        <end position="440"/>
    </location>
</feature>
<feature type="binding site" evidence="1">
    <location>
        <position position="14"/>
    </location>
    <ligand>
        <name>[4Fe-4S] cluster</name>
        <dbReference type="ChEBI" id="CHEBI:49883"/>
        <label>1</label>
    </ligand>
</feature>
<feature type="binding site" evidence="1">
    <location>
        <position position="50"/>
    </location>
    <ligand>
        <name>[4Fe-4S] cluster</name>
        <dbReference type="ChEBI" id="CHEBI:49883"/>
        <label>1</label>
    </ligand>
</feature>
<feature type="binding site" evidence="1">
    <location>
        <position position="84"/>
    </location>
    <ligand>
        <name>[4Fe-4S] cluster</name>
        <dbReference type="ChEBI" id="CHEBI:49883"/>
        <label>1</label>
    </ligand>
</feature>
<feature type="binding site" evidence="1">
    <location>
        <position position="159"/>
    </location>
    <ligand>
        <name>[4Fe-4S] cluster</name>
        <dbReference type="ChEBI" id="CHEBI:49883"/>
        <label>2</label>
        <note>4Fe-4S-S-AdoMet</note>
    </ligand>
</feature>
<feature type="binding site" evidence="1">
    <location>
        <position position="163"/>
    </location>
    <ligand>
        <name>[4Fe-4S] cluster</name>
        <dbReference type="ChEBI" id="CHEBI:49883"/>
        <label>2</label>
        <note>4Fe-4S-S-AdoMet</note>
    </ligand>
</feature>
<feature type="binding site" evidence="1">
    <location>
        <position position="166"/>
    </location>
    <ligand>
        <name>[4Fe-4S] cluster</name>
        <dbReference type="ChEBI" id="CHEBI:49883"/>
        <label>2</label>
        <note>4Fe-4S-S-AdoMet</note>
    </ligand>
</feature>
<accession>A5G670</accession>
<evidence type="ECO:0000255" key="1">
    <source>
        <dbReference type="HAMAP-Rule" id="MF_01864"/>
    </source>
</evidence>
<evidence type="ECO:0000255" key="2">
    <source>
        <dbReference type="PROSITE-ProRule" id="PRU01266"/>
    </source>
</evidence>
<sequence>MTREKLLYLETFGCQMNVSDSEKIAALLKGIGYFPTQDSSQADLVILNTCSVRAKAEEKVYNHLVQYKGLKRKKPGIILGVGGCVAQQEGERLLANVPHLDIVFGTHNLHLLPELVRAAEKGERLAEVGFIDNETRLDLFPVDERTDGVSRFVTVMQGCENFCSYCIVPYVRGREISRRSADILGEVRGMAGNGVKEVTLLGQNVNSYGLKSSGEMSFIALLREVSLIPGIERIRFTTSHPKDFSQPLIDCFAEIPKLCRHIHLPAQSGSNAVLAAMNRGYTREEYLGSIARLKAACPSIQITGDIIVGFPGETEEDFQATLSLMEEVRYTDVFSFIYSKRPETKAAGYADEVGQDEKQGRLSRLLDLQRRITLETNKSFVGTVQQVLIEGESRRGGQFYGRTSGNRVVNLAADVSLVGSIVNVMITRGDQNSLQGELCR</sequence>
<gene>
    <name evidence="1" type="primary">miaB</name>
    <name type="ordered locus">Gura_3127</name>
</gene>
<keyword id="KW-0004">4Fe-4S</keyword>
<keyword id="KW-0963">Cytoplasm</keyword>
<keyword id="KW-0408">Iron</keyword>
<keyword id="KW-0411">Iron-sulfur</keyword>
<keyword id="KW-0479">Metal-binding</keyword>
<keyword id="KW-1185">Reference proteome</keyword>
<keyword id="KW-0949">S-adenosyl-L-methionine</keyword>
<keyword id="KW-0808">Transferase</keyword>
<keyword id="KW-0819">tRNA processing</keyword>
<reference key="1">
    <citation type="submission" date="2007-05" db="EMBL/GenBank/DDBJ databases">
        <title>Complete sequence of Geobacter uraniireducens Rf4.</title>
        <authorList>
            <consortium name="US DOE Joint Genome Institute"/>
            <person name="Copeland A."/>
            <person name="Lucas S."/>
            <person name="Lapidus A."/>
            <person name="Barry K."/>
            <person name="Detter J.C."/>
            <person name="Glavina del Rio T."/>
            <person name="Hammon N."/>
            <person name="Israni S."/>
            <person name="Dalin E."/>
            <person name="Tice H."/>
            <person name="Pitluck S."/>
            <person name="Chertkov O."/>
            <person name="Brettin T."/>
            <person name="Bruce D."/>
            <person name="Han C."/>
            <person name="Schmutz J."/>
            <person name="Larimer F."/>
            <person name="Land M."/>
            <person name="Hauser L."/>
            <person name="Kyrpides N."/>
            <person name="Mikhailova N."/>
            <person name="Shelobolina E."/>
            <person name="Aklujkar M."/>
            <person name="Lovley D."/>
            <person name="Richardson P."/>
        </authorList>
    </citation>
    <scope>NUCLEOTIDE SEQUENCE [LARGE SCALE GENOMIC DNA]</scope>
    <source>
        <strain>ATCC BAA-1134 / JCM 13001 / Rf4</strain>
    </source>
</reference>
<proteinExistence type="inferred from homology"/>